<name>Y1060_MYCSK</name>
<comment type="function">
    <text evidence="1">Exhibits S-adenosyl-L-methionine-dependent methyltransferase activity.</text>
</comment>
<comment type="similarity">
    <text evidence="2">Belongs to the UPF0677 family.</text>
</comment>
<gene>
    <name type="ordered locus">Mkms_1060</name>
</gene>
<reference key="1">
    <citation type="submission" date="2006-12" db="EMBL/GenBank/DDBJ databases">
        <title>Complete sequence of chromosome of Mycobacterium sp. KMS.</title>
        <authorList>
            <consortium name="US DOE Joint Genome Institute"/>
            <person name="Copeland A."/>
            <person name="Lucas S."/>
            <person name="Lapidus A."/>
            <person name="Barry K."/>
            <person name="Detter J.C."/>
            <person name="Glavina del Rio T."/>
            <person name="Hammon N."/>
            <person name="Israni S."/>
            <person name="Dalin E."/>
            <person name="Tice H."/>
            <person name="Pitluck S."/>
            <person name="Kiss H."/>
            <person name="Brettin T."/>
            <person name="Bruce D."/>
            <person name="Han C."/>
            <person name="Tapia R."/>
            <person name="Gilna P."/>
            <person name="Schmutz J."/>
            <person name="Larimer F."/>
            <person name="Land M."/>
            <person name="Hauser L."/>
            <person name="Kyrpides N."/>
            <person name="Mikhailova N."/>
            <person name="Miller C.D."/>
            <person name="Richardson P."/>
        </authorList>
    </citation>
    <scope>NUCLEOTIDE SEQUENCE [LARGE SCALE GENOMIC DNA]</scope>
    <source>
        <strain>KMS</strain>
    </source>
</reference>
<dbReference type="EC" id="2.1.1.-"/>
<dbReference type="EMBL" id="CP000518">
    <property type="protein sequence ID" value="ABL90274.1"/>
    <property type="molecule type" value="Genomic_DNA"/>
</dbReference>
<dbReference type="SMR" id="A1UBR6"/>
<dbReference type="STRING" id="189918.Mkms_1060"/>
<dbReference type="KEGG" id="mkm:Mkms_1060"/>
<dbReference type="HOGENOM" id="CLU_056160_2_1_11"/>
<dbReference type="OrthoDB" id="9806164at2"/>
<dbReference type="GO" id="GO:0008168">
    <property type="term" value="F:methyltransferase activity"/>
    <property type="evidence" value="ECO:0007669"/>
    <property type="project" value="UniProtKB-KW"/>
</dbReference>
<dbReference type="GO" id="GO:0032259">
    <property type="term" value="P:methylation"/>
    <property type="evidence" value="ECO:0007669"/>
    <property type="project" value="UniProtKB-KW"/>
</dbReference>
<dbReference type="FunFam" id="3.40.50.150:FF:000152">
    <property type="entry name" value="S-adenosyl-L-methionine-dependent methyltransferase"/>
    <property type="match status" value="1"/>
</dbReference>
<dbReference type="Gene3D" id="3.40.50.150">
    <property type="entry name" value="Vaccinia Virus protein VP39"/>
    <property type="match status" value="1"/>
</dbReference>
<dbReference type="InterPro" id="IPR007213">
    <property type="entry name" value="Ppm1/Ppm2/Tcmp"/>
</dbReference>
<dbReference type="InterPro" id="IPR029063">
    <property type="entry name" value="SAM-dependent_MTases_sf"/>
</dbReference>
<dbReference type="InterPro" id="IPR011610">
    <property type="entry name" value="SAM_mthyl_Trfase_ML2640-like"/>
</dbReference>
<dbReference type="NCBIfam" id="TIGR00027">
    <property type="entry name" value="mthyl_TIGR00027"/>
    <property type="match status" value="1"/>
</dbReference>
<dbReference type="PANTHER" id="PTHR43619">
    <property type="entry name" value="S-ADENOSYL-L-METHIONINE-DEPENDENT METHYLTRANSFERASE YKTD-RELATED"/>
    <property type="match status" value="1"/>
</dbReference>
<dbReference type="PANTHER" id="PTHR43619:SF2">
    <property type="entry name" value="S-ADENOSYL-L-METHIONINE-DEPENDENT METHYLTRANSFERASES SUPERFAMILY PROTEIN"/>
    <property type="match status" value="1"/>
</dbReference>
<dbReference type="Pfam" id="PF04072">
    <property type="entry name" value="LCM"/>
    <property type="match status" value="1"/>
</dbReference>
<dbReference type="SUPFAM" id="SSF53335">
    <property type="entry name" value="S-adenosyl-L-methionine-dependent methyltransferases"/>
    <property type="match status" value="1"/>
</dbReference>
<feature type="chain" id="PRO_0000361211" description="Putative S-adenosyl-L-methionine-dependent methyltransferase Mkms_1060">
    <location>
        <begin position="1"/>
        <end position="297"/>
    </location>
</feature>
<feature type="binding site" evidence="1">
    <location>
        <position position="124"/>
    </location>
    <ligand>
        <name>S-adenosyl-L-methionine</name>
        <dbReference type="ChEBI" id="CHEBI:59789"/>
    </ligand>
</feature>
<feature type="binding site" evidence="1">
    <location>
        <begin position="153"/>
        <end position="154"/>
    </location>
    <ligand>
        <name>S-adenosyl-L-methionine</name>
        <dbReference type="ChEBI" id="CHEBI:59789"/>
    </ligand>
</feature>
<accession>A1UBR6</accession>
<keyword id="KW-0489">Methyltransferase</keyword>
<keyword id="KW-0949">S-adenosyl-L-methionine</keyword>
<keyword id="KW-0808">Transferase</keyword>
<organism>
    <name type="scientific">Mycobacterium sp. (strain KMS)</name>
    <dbReference type="NCBI Taxonomy" id="189918"/>
    <lineage>
        <taxon>Bacteria</taxon>
        <taxon>Bacillati</taxon>
        <taxon>Actinomycetota</taxon>
        <taxon>Actinomycetes</taxon>
        <taxon>Mycobacteriales</taxon>
        <taxon>Mycobacteriaceae</taxon>
        <taxon>Mycobacterium</taxon>
    </lineage>
</organism>
<evidence type="ECO:0000250" key="1"/>
<evidence type="ECO:0000305" key="2"/>
<proteinExistence type="inferred from homology"/>
<sequence>MARSDEDTWDLASSVGATATMVAAARAVASRGPDTLIDDPYADALVRAVGVEYFVKLLDGEITLEADNAAMLAVMTDVMAVRTRFFDDFFLSSGLPQAVILASGLDARTYRLPWPSGSVVYEIDQPEVIEFKTRTLADLGASPAAELRTVAIDLRDDWPRALRDRGFDPTAPTAWIAEGLLIYLPPDAQDRLFDNITALSAPGSRLATEFHPDAGARIGASSQRMAEEWRRHGLDLDMADLFYDGERNPVVDYLRERGWEVEARSRPDMFAHYGRPFPTGEAVEALRQSLAVTATRR</sequence>
<protein>
    <recommendedName>
        <fullName>Putative S-adenosyl-L-methionine-dependent methyltransferase Mkms_1060</fullName>
        <ecNumber>2.1.1.-</ecNumber>
    </recommendedName>
</protein>